<gene>
    <name evidence="2" type="primary">ftsW</name>
    <name type="ordered locus">Ssed_0409</name>
</gene>
<proteinExistence type="inferred from homology"/>
<sequence>MRSEERQLNLFGTSVNWSWPNLFKEREAPGMQLYDRALLFAVLSLICFGFVMVMSASMPEAQSLTGNPYHFAIRHFAYLVGCAVIAAVVLRIEMSRWQQFSPLLLLIVGIMLVAVLLVGTSVNGATRWLSVGPIRIQVAELAKFAFTIYMAGYLVRRHQEIRENAKGFYKPIAVFAVYAFLILMQPDLGTVVVLFVGTVGLLFLAGARLLDFFALILTGVMAFVALVLLEPYRMRRVTSFMDPWQDPFGSGYQLTQSLMAYGRGDWFGQGLGNSIQKLEYLPEAHTDFIFAVIGEELGFIGIVVVLSVLLFVALRAIKLGNLCIEIDKPFEGYLAYAIGIWFCFQTVVNVGASIGMLPTKGLTLPFISYGGSSLWVMTAAAMILIRIDHERRLSSIQAVQGKKVNDNREY</sequence>
<protein>
    <recommendedName>
        <fullName evidence="2">Probable peptidoglycan glycosyltransferase FtsW</fullName>
        <shortName evidence="2">PGT</shortName>
        <ecNumber evidence="2">2.4.99.28</ecNumber>
    </recommendedName>
    <alternativeName>
        <fullName evidence="2">Cell division protein FtsW</fullName>
    </alternativeName>
    <alternativeName>
        <fullName evidence="2">Cell wall polymerase</fullName>
    </alternativeName>
    <alternativeName>
        <fullName evidence="2">Peptidoglycan polymerase</fullName>
        <shortName evidence="2">PG polymerase</shortName>
    </alternativeName>
</protein>
<dbReference type="EC" id="2.4.99.28" evidence="2"/>
<dbReference type="EMBL" id="CP000821">
    <property type="protein sequence ID" value="ABV35022.1"/>
    <property type="molecule type" value="Genomic_DNA"/>
</dbReference>
<dbReference type="RefSeq" id="WP_012140759.1">
    <property type="nucleotide sequence ID" value="NC_009831.1"/>
</dbReference>
<dbReference type="SMR" id="A8FQ99"/>
<dbReference type="STRING" id="425104.Ssed_0409"/>
<dbReference type="KEGG" id="sse:Ssed_0409"/>
<dbReference type="eggNOG" id="COG0772">
    <property type="taxonomic scope" value="Bacteria"/>
</dbReference>
<dbReference type="HOGENOM" id="CLU_029243_1_1_6"/>
<dbReference type="OrthoDB" id="9768187at2"/>
<dbReference type="UniPathway" id="UPA00219"/>
<dbReference type="Proteomes" id="UP000002015">
    <property type="component" value="Chromosome"/>
</dbReference>
<dbReference type="GO" id="GO:0032153">
    <property type="term" value="C:cell division site"/>
    <property type="evidence" value="ECO:0007669"/>
    <property type="project" value="UniProtKB-UniRule"/>
</dbReference>
<dbReference type="GO" id="GO:0005886">
    <property type="term" value="C:plasma membrane"/>
    <property type="evidence" value="ECO:0007669"/>
    <property type="project" value="UniProtKB-SubCell"/>
</dbReference>
<dbReference type="GO" id="GO:0015648">
    <property type="term" value="F:lipid-linked peptidoglycan transporter activity"/>
    <property type="evidence" value="ECO:0007669"/>
    <property type="project" value="TreeGrafter"/>
</dbReference>
<dbReference type="GO" id="GO:0008955">
    <property type="term" value="F:peptidoglycan glycosyltransferase activity"/>
    <property type="evidence" value="ECO:0007669"/>
    <property type="project" value="UniProtKB-UniRule"/>
</dbReference>
<dbReference type="GO" id="GO:0071555">
    <property type="term" value="P:cell wall organization"/>
    <property type="evidence" value="ECO:0007669"/>
    <property type="project" value="UniProtKB-KW"/>
</dbReference>
<dbReference type="GO" id="GO:0043093">
    <property type="term" value="P:FtsZ-dependent cytokinesis"/>
    <property type="evidence" value="ECO:0007669"/>
    <property type="project" value="UniProtKB-UniRule"/>
</dbReference>
<dbReference type="GO" id="GO:0009252">
    <property type="term" value="P:peptidoglycan biosynthetic process"/>
    <property type="evidence" value="ECO:0007669"/>
    <property type="project" value="UniProtKB-UniRule"/>
</dbReference>
<dbReference type="GO" id="GO:0008360">
    <property type="term" value="P:regulation of cell shape"/>
    <property type="evidence" value="ECO:0007669"/>
    <property type="project" value="UniProtKB-KW"/>
</dbReference>
<dbReference type="HAMAP" id="MF_00913">
    <property type="entry name" value="PGT_FtsW_proteobact"/>
    <property type="match status" value="1"/>
</dbReference>
<dbReference type="InterPro" id="IPR018365">
    <property type="entry name" value="Cell_cycle_FtsW-rel_CS"/>
</dbReference>
<dbReference type="InterPro" id="IPR013437">
    <property type="entry name" value="FtsW"/>
</dbReference>
<dbReference type="InterPro" id="IPR001182">
    <property type="entry name" value="FtsW/RodA"/>
</dbReference>
<dbReference type="NCBIfam" id="TIGR02614">
    <property type="entry name" value="ftsW"/>
    <property type="match status" value="1"/>
</dbReference>
<dbReference type="NCBIfam" id="NF008042">
    <property type="entry name" value="PRK10774.1"/>
    <property type="match status" value="1"/>
</dbReference>
<dbReference type="PANTHER" id="PTHR30474">
    <property type="entry name" value="CELL CYCLE PROTEIN"/>
    <property type="match status" value="1"/>
</dbReference>
<dbReference type="PANTHER" id="PTHR30474:SF2">
    <property type="entry name" value="PEPTIDOGLYCAN GLYCOSYLTRANSFERASE FTSW-RELATED"/>
    <property type="match status" value="1"/>
</dbReference>
<dbReference type="Pfam" id="PF01098">
    <property type="entry name" value="FTSW_RODA_SPOVE"/>
    <property type="match status" value="1"/>
</dbReference>
<dbReference type="PROSITE" id="PS00428">
    <property type="entry name" value="FTSW_RODA_SPOVE"/>
    <property type="match status" value="1"/>
</dbReference>
<feature type="chain" id="PRO_0000415212" description="Probable peptidoglycan glycosyltransferase FtsW">
    <location>
        <begin position="1"/>
        <end position="410"/>
    </location>
</feature>
<feature type="topological domain" description="Cytoplasmic" evidence="1">
    <location>
        <begin position="1"/>
        <end position="37"/>
    </location>
</feature>
<feature type="transmembrane region" description="Helical" evidence="2">
    <location>
        <begin position="38"/>
        <end position="58"/>
    </location>
</feature>
<feature type="topological domain" description="Periplasmic" evidence="1">
    <location>
        <begin position="59"/>
        <end position="69"/>
    </location>
</feature>
<feature type="transmembrane region" description="Helical" evidence="2">
    <location>
        <begin position="70"/>
        <end position="90"/>
    </location>
</feature>
<feature type="topological domain" description="Cytoplasmic" evidence="1">
    <location>
        <begin position="91"/>
        <end position="99"/>
    </location>
</feature>
<feature type="transmembrane region" description="Helical" evidence="2">
    <location>
        <begin position="100"/>
        <end position="120"/>
    </location>
</feature>
<feature type="topological domain" description="Periplasmic" evidence="1">
    <location>
        <begin position="121"/>
        <end position="131"/>
    </location>
</feature>
<feature type="transmembrane region" description="Helical" evidence="2">
    <location>
        <begin position="132"/>
        <end position="154"/>
    </location>
</feature>
<feature type="topological domain" description="Cytoplasmic" evidence="1">
    <location>
        <begin position="155"/>
        <end position="163"/>
    </location>
</feature>
<feature type="transmembrane region" description="Helical" evidence="2">
    <location>
        <begin position="164"/>
        <end position="184"/>
    </location>
</feature>
<feature type="topological domain" description="Periplasmic" evidence="1">
    <location>
        <begin position="185"/>
        <end position="186"/>
    </location>
</feature>
<feature type="transmembrane region" description="Helical" evidence="2">
    <location>
        <begin position="187"/>
        <end position="207"/>
    </location>
</feature>
<feature type="topological domain" description="Cytoplasmic" evidence="1">
    <location>
        <position position="208"/>
    </location>
</feature>
<feature type="transmembrane region" description="Helical" evidence="2">
    <location>
        <begin position="209"/>
        <end position="229"/>
    </location>
</feature>
<feature type="topological domain" description="Periplasmic" evidence="1">
    <location>
        <begin position="230"/>
        <end position="291"/>
    </location>
</feature>
<feature type="transmembrane region" description="Helical" evidence="2">
    <location>
        <begin position="292"/>
        <end position="312"/>
    </location>
</feature>
<feature type="topological domain" description="Cytoplasmic" evidence="1">
    <location>
        <begin position="313"/>
        <end position="336"/>
    </location>
</feature>
<feature type="transmembrane region" description="Helical" evidence="2">
    <location>
        <begin position="337"/>
        <end position="357"/>
    </location>
</feature>
<feature type="topological domain" description="Periplasmic" evidence="1">
    <location>
        <begin position="358"/>
        <end position="364"/>
    </location>
</feature>
<feature type="transmembrane region" description="Helical" evidence="2">
    <location>
        <begin position="365"/>
        <end position="385"/>
    </location>
</feature>
<feature type="topological domain" description="Cytoplasmic" evidence="1">
    <location>
        <begin position="386"/>
        <end position="410"/>
    </location>
</feature>
<evidence type="ECO:0000255" key="1"/>
<evidence type="ECO:0000255" key="2">
    <source>
        <dbReference type="HAMAP-Rule" id="MF_00913"/>
    </source>
</evidence>
<comment type="function">
    <text evidence="2">Peptidoglycan polymerase that is essential for cell division.</text>
</comment>
<comment type="catalytic activity">
    <reaction evidence="2">
        <text>[GlcNAc-(1-&gt;4)-Mur2Ac(oyl-L-Ala-gamma-D-Glu-L-Lys-D-Ala-D-Ala)](n)-di-trans,octa-cis-undecaprenyl diphosphate + beta-D-GlcNAc-(1-&gt;4)-Mur2Ac(oyl-L-Ala-gamma-D-Glu-L-Lys-D-Ala-D-Ala)-di-trans,octa-cis-undecaprenyl diphosphate = [GlcNAc-(1-&gt;4)-Mur2Ac(oyl-L-Ala-gamma-D-Glu-L-Lys-D-Ala-D-Ala)](n+1)-di-trans,octa-cis-undecaprenyl diphosphate + di-trans,octa-cis-undecaprenyl diphosphate + H(+)</text>
        <dbReference type="Rhea" id="RHEA:23708"/>
        <dbReference type="Rhea" id="RHEA-COMP:9602"/>
        <dbReference type="Rhea" id="RHEA-COMP:9603"/>
        <dbReference type="ChEBI" id="CHEBI:15378"/>
        <dbReference type="ChEBI" id="CHEBI:58405"/>
        <dbReference type="ChEBI" id="CHEBI:60033"/>
        <dbReference type="ChEBI" id="CHEBI:78435"/>
        <dbReference type="EC" id="2.4.99.28"/>
    </reaction>
</comment>
<comment type="pathway">
    <text evidence="2">Cell wall biogenesis; peptidoglycan biosynthesis.</text>
</comment>
<comment type="subcellular location">
    <subcellularLocation>
        <location evidence="2">Cell inner membrane</location>
        <topology evidence="2">Multi-pass membrane protein</topology>
    </subcellularLocation>
    <text evidence="2">Localizes to the division septum.</text>
</comment>
<comment type="similarity">
    <text evidence="2">Belongs to the SEDS family. FtsW subfamily.</text>
</comment>
<reference key="1">
    <citation type="submission" date="2007-08" db="EMBL/GenBank/DDBJ databases">
        <title>Complete sequence of Shewanella sediminis HAW-EB3.</title>
        <authorList>
            <consortium name="US DOE Joint Genome Institute"/>
            <person name="Copeland A."/>
            <person name="Lucas S."/>
            <person name="Lapidus A."/>
            <person name="Barry K."/>
            <person name="Glavina del Rio T."/>
            <person name="Dalin E."/>
            <person name="Tice H."/>
            <person name="Pitluck S."/>
            <person name="Chertkov O."/>
            <person name="Brettin T."/>
            <person name="Bruce D."/>
            <person name="Detter J.C."/>
            <person name="Han C."/>
            <person name="Schmutz J."/>
            <person name="Larimer F."/>
            <person name="Land M."/>
            <person name="Hauser L."/>
            <person name="Kyrpides N."/>
            <person name="Kim E."/>
            <person name="Zhao J.-S."/>
            <person name="Richardson P."/>
        </authorList>
    </citation>
    <scope>NUCLEOTIDE SEQUENCE [LARGE SCALE GENOMIC DNA]</scope>
    <source>
        <strain>HAW-EB3</strain>
    </source>
</reference>
<name>FTSW_SHESH</name>
<keyword id="KW-0131">Cell cycle</keyword>
<keyword id="KW-0132">Cell division</keyword>
<keyword id="KW-0997">Cell inner membrane</keyword>
<keyword id="KW-1003">Cell membrane</keyword>
<keyword id="KW-0133">Cell shape</keyword>
<keyword id="KW-0961">Cell wall biogenesis/degradation</keyword>
<keyword id="KW-0328">Glycosyltransferase</keyword>
<keyword id="KW-0472">Membrane</keyword>
<keyword id="KW-0573">Peptidoglycan synthesis</keyword>
<keyword id="KW-1185">Reference proteome</keyword>
<keyword id="KW-0808">Transferase</keyword>
<keyword id="KW-0812">Transmembrane</keyword>
<keyword id="KW-1133">Transmembrane helix</keyword>
<organism>
    <name type="scientific">Shewanella sediminis (strain HAW-EB3)</name>
    <dbReference type="NCBI Taxonomy" id="425104"/>
    <lineage>
        <taxon>Bacteria</taxon>
        <taxon>Pseudomonadati</taxon>
        <taxon>Pseudomonadota</taxon>
        <taxon>Gammaproteobacteria</taxon>
        <taxon>Alteromonadales</taxon>
        <taxon>Shewanellaceae</taxon>
        <taxon>Shewanella</taxon>
    </lineage>
</organism>
<accession>A8FQ99</accession>